<organism>
    <name type="scientific">Pseudomonas entomophila (strain L48)</name>
    <dbReference type="NCBI Taxonomy" id="384676"/>
    <lineage>
        <taxon>Bacteria</taxon>
        <taxon>Pseudomonadati</taxon>
        <taxon>Pseudomonadota</taxon>
        <taxon>Gammaproteobacteria</taxon>
        <taxon>Pseudomonadales</taxon>
        <taxon>Pseudomonadaceae</taxon>
        <taxon>Pseudomonas</taxon>
    </lineage>
</organism>
<comment type="catalytic activity">
    <reaction evidence="1">
        <text>L-histidine + H(+) = histamine + CO2</text>
        <dbReference type="Rhea" id="RHEA:20840"/>
        <dbReference type="ChEBI" id="CHEBI:15378"/>
        <dbReference type="ChEBI" id="CHEBI:16526"/>
        <dbReference type="ChEBI" id="CHEBI:57595"/>
        <dbReference type="ChEBI" id="CHEBI:58432"/>
        <dbReference type="EC" id="4.1.1.22"/>
    </reaction>
</comment>
<comment type="cofactor">
    <cofactor evidence="1">
        <name>pyridoxal 5'-phosphate</name>
        <dbReference type="ChEBI" id="CHEBI:597326"/>
    </cofactor>
</comment>
<comment type="subunit">
    <text evidence="1">Homotetramer.</text>
</comment>
<comment type="similarity">
    <text evidence="1">Belongs to the group II decarboxylase family.</text>
</comment>
<gene>
    <name evidence="1" type="primary">hdc</name>
    <name type="ordered locus">PSEEN2506</name>
</gene>
<dbReference type="EC" id="4.1.1.22" evidence="1"/>
<dbReference type="EMBL" id="CT573326">
    <property type="protein sequence ID" value="CAK15310.1"/>
    <property type="molecule type" value="Genomic_DNA"/>
</dbReference>
<dbReference type="RefSeq" id="WP_011533709.1">
    <property type="nucleotide sequence ID" value="NC_008027.1"/>
</dbReference>
<dbReference type="SMR" id="Q1IAK7"/>
<dbReference type="STRING" id="384676.PSEEN2506"/>
<dbReference type="GeneID" id="32805680"/>
<dbReference type="KEGG" id="pen:PSEEN2506"/>
<dbReference type="eggNOG" id="COG0076">
    <property type="taxonomic scope" value="Bacteria"/>
</dbReference>
<dbReference type="HOGENOM" id="CLU_028929_0_2_6"/>
<dbReference type="OrthoDB" id="9803665at2"/>
<dbReference type="Proteomes" id="UP000000658">
    <property type="component" value="Chromosome"/>
</dbReference>
<dbReference type="GO" id="GO:0004398">
    <property type="term" value="F:histidine decarboxylase activity"/>
    <property type="evidence" value="ECO:0007669"/>
    <property type="project" value="UniProtKB-UniRule"/>
</dbReference>
<dbReference type="GO" id="GO:0030170">
    <property type="term" value="F:pyridoxal phosphate binding"/>
    <property type="evidence" value="ECO:0007669"/>
    <property type="project" value="InterPro"/>
</dbReference>
<dbReference type="GO" id="GO:0019752">
    <property type="term" value="P:carboxylic acid metabolic process"/>
    <property type="evidence" value="ECO:0007669"/>
    <property type="project" value="InterPro"/>
</dbReference>
<dbReference type="Gene3D" id="3.40.640.10">
    <property type="entry name" value="Type I PLP-dependent aspartate aminotransferase-like (Major domain)"/>
    <property type="match status" value="1"/>
</dbReference>
<dbReference type="HAMAP" id="MF_00609">
    <property type="entry name" value="Pyridoxal_decarbox"/>
    <property type="match status" value="1"/>
</dbReference>
<dbReference type="InterPro" id="IPR051151">
    <property type="entry name" value="Group_II_Decarboxylase"/>
</dbReference>
<dbReference type="InterPro" id="IPR023523">
    <property type="entry name" value="Hist_deCOase_bac"/>
</dbReference>
<dbReference type="InterPro" id="IPR002129">
    <property type="entry name" value="PyrdxlP-dep_de-COase"/>
</dbReference>
<dbReference type="InterPro" id="IPR015424">
    <property type="entry name" value="PyrdxlP-dep_Trfase"/>
</dbReference>
<dbReference type="InterPro" id="IPR015421">
    <property type="entry name" value="PyrdxlP-dep_Trfase_major"/>
</dbReference>
<dbReference type="InterPro" id="IPR021115">
    <property type="entry name" value="Pyridoxal-P_BS"/>
</dbReference>
<dbReference type="NCBIfam" id="NF002748">
    <property type="entry name" value="PRK02769.1"/>
    <property type="match status" value="1"/>
</dbReference>
<dbReference type="PANTHER" id="PTHR46101">
    <property type="match status" value="1"/>
</dbReference>
<dbReference type="PANTHER" id="PTHR46101:SF2">
    <property type="entry name" value="SERINE DECARBOXYLASE"/>
    <property type="match status" value="1"/>
</dbReference>
<dbReference type="Pfam" id="PF00282">
    <property type="entry name" value="Pyridoxal_deC"/>
    <property type="match status" value="1"/>
</dbReference>
<dbReference type="SUPFAM" id="SSF53383">
    <property type="entry name" value="PLP-dependent transferases"/>
    <property type="match status" value="1"/>
</dbReference>
<dbReference type="PROSITE" id="PS00392">
    <property type="entry name" value="DDC_GAD_HDC_YDC"/>
    <property type="match status" value="1"/>
</dbReference>
<evidence type="ECO:0000255" key="1">
    <source>
        <dbReference type="HAMAP-Rule" id="MF_00609"/>
    </source>
</evidence>
<protein>
    <recommendedName>
        <fullName evidence="1">Histidine decarboxylase</fullName>
        <shortName evidence="1">HDC</shortName>
        <ecNumber evidence="1">4.1.1.22</ecNumber>
    </recommendedName>
</protein>
<name>DCHS_PSEE4</name>
<reference key="1">
    <citation type="journal article" date="2006" name="Nat. Biotechnol.">
        <title>Complete genome sequence of the entomopathogenic and metabolically versatile soil bacterium Pseudomonas entomophila.</title>
        <authorList>
            <person name="Vodovar N."/>
            <person name="Vallenet D."/>
            <person name="Cruveiller S."/>
            <person name="Rouy Z."/>
            <person name="Barbe V."/>
            <person name="Acosta C."/>
            <person name="Cattolico L."/>
            <person name="Jubin C."/>
            <person name="Lajus A."/>
            <person name="Segurens B."/>
            <person name="Vacherie B."/>
            <person name="Wincker P."/>
            <person name="Weissenbach J."/>
            <person name="Lemaitre B."/>
            <person name="Medigue C."/>
            <person name="Boccard F."/>
        </authorList>
    </citation>
    <scope>NUCLEOTIDE SEQUENCE [LARGE SCALE GENOMIC DNA]</scope>
    <source>
        <strain>L48</strain>
    </source>
</reference>
<sequence length="403" mass="45223">MTLSSADQARLDQFWEHCLKNQYFNIGYPENADFNYAQLHRFLRFSINNCGDWAEPGNYLLNSFDFEKDVMAYFAELFSIPLEESWGYVTNGGTEGNMFGCYLARELFPTGTLYYSKDTHYSVAKIVKLLRIDCRAVESLPNGEIDYDDLMAKIAADQEQHPIIFVNVGTTMRGAIDNIATIQQRLEEVGIPREDYYLHADAALSGMILPFVDNPQPFNFADGVDSICVSGHKMIGSPIPCGIVVAKRENVERISVDVDYIRANDKTISGSRNGHTPMMMWAALRSHSPAQWRRRVRHSLNSAQYAVDRLQAAGIDAWRHDNSITVVFPCPSSRIARKYCLATSGDTAHLITTPHHQDKSMIDALIDEVIAEHQPNEWRAGLGLAGLDGVPPERVAASHFDVI</sequence>
<keyword id="KW-0210">Decarboxylase</keyword>
<keyword id="KW-0456">Lyase</keyword>
<keyword id="KW-0663">Pyridoxal phosphate</keyword>
<feature type="chain" id="PRO_1000061289" description="Histidine decarboxylase">
    <location>
        <begin position="1"/>
        <end position="403"/>
    </location>
</feature>
<feature type="binding site" evidence="1">
    <location>
        <position position="120"/>
    </location>
    <ligand>
        <name>substrate</name>
    </ligand>
</feature>
<feature type="modified residue" description="N6-(pyridoxal phosphate)lysine" evidence="1">
    <location>
        <position position="233"/>
    </location>
</feature>
<proteinExistence type="inferred from homology"/>
<accession>Q1IAK7</accession>